<gene>
    <name evidence="1" type="primary">ispH</name>
    <name type="ordered locus">TRQ2_1336</name>
</gene>
<feature type="chain" id="PRO_1000098984" description="4-hydroxy-3-methylbut-2-enyl diphosphate reductase">
    <location>
        <begin position="1"/>
        <end position="275"/>
    </location>
</feature>
<feature type="active site" description="Proton donor" evidence="1">
    <location>
        <position position="121"/>
    </location>
</feature>
<feature type="binding site" evidence="1">
    <location>
        <position position="12"/>
    </location>
    <ligand>
        <name>[4Fe-4S] cluster</name>
        <dbReference type="ChEBI" id="CHEBI:49883"/>
    </ligand>
</feature>
<feature type="binding site" evidence="1">
    <location>
        <position position="40"/>
    </location>
    <ligand>
        <name>(2E)-4-hydroxy-3-methylbut-2-enyl diphosphate</name>
        <dbReference type="ChEBI" id="CHEBI:128753"/>
    </ligand>
</feature>
<feature type="binding site" evidence="1">
    <location>
        <position position="40"/>
    </location>
    <ligand>
        <name>dimethylallyl diphosphate</name>
        <dbReference type="ChEBI" id="CHEBI:57623"/>
    </ligand>
</feature>
<feature type="binding site" evidence="1">
    <location>
        <position position="40"/>
    </location>
    <ligand>
        <name>isopentenyl diphosphate</name>
        <dbReference type="ChEBI" id="CHEBI:128769"/>
    </ligand>
</feature>
<feature type="binding site" evidence="1">
    <location>
        <position position="70"/>
    </location>
    <ligand>
        <name>(2E)-4-hydroxy-3-methylbut-2-enyl diphosphate</name>
        <dbReference type="ChEBI" id="CHEBI:128753"/>
    </ligand>
</feature>
<feature type="binding site" evidence="1">
    <location>
        <position position="70"/>
    </location>
    <ligand>
        <name>dimethylallyl diphosphate</name>
        <dbReference type="ChEBI" id="CHEBI:57623"/>
    </ligand>
</feature>
<feature type="binding site" evidence="1">
    <location>
        <position position="70"/>
    </location>
    <ligand>
        <name>isopentenyl diphosphate</name>
        <dbReference type="ChEBI" id="CHEBI:128769"/>
    </ligand>
</feature>
<feature type="binding site" evidence="1">
    <location>
        <position position="92"/>
    </location>
    <ligand>
        <name>[4Fe-4S] cluster</name>
        <dbReference type="ChEBI" id="CHEBI:49883"/>
    </ligand>
</feature>
<feature type="binding site" evidence="1">
    <location>
        <position position="119"/>
    </location>
    <ligand>
        <name>(2E)-4-hydroxy-3-methylbut-2-enyl diphosphate</name>
        <dbReference type="ChEBI" id="CHEBI:128753"/>
    </ligand>
</feature>
<feature type="binding site" evidence="1">
    <location>
        <position position="119"/>
    </location>
    <ligand>
        <name>dimethylallyl diphosphate</name>
        <dbReference type="ChEBI" id="CHEBI:57623"/>
    </ligand>
</feature>
<feature type="binding site" evidence="1">
    <location>
        <position position="119"/>
    </location>
    <ligand>
        <name>isopentenyl diphosphate</name>
        <dbReference type="ChEBI" id="CHEBI:128769"/>
    </ligand>
</feature>
<feature type="binding site" evidence="1">
    <location>
        <position position="151"/>
    </location>
    <ligand>
        <name>(2E)-4-hydroxy-3-methylbut-2-enyl diphosphate</name>
        <dbReference type="ChEBI" id="CHEBI:128753"/>
    </ligand>
</feature>
<feature type="binding site" evidence="1">
    <location>
        <position position="181"/>
    </location>
    <ligand>
        <name>[4Fe-4S] cluster</name>
        <dbReference type="ChEBI" id="CHEBI:49883"/>
    </ligand>
</feature>
<feature type="binding site" evidence="1">
    <location>
        <position position="209"/>
    </location>
    <ligand>
        <name>(2E)-4-hydroxy-3-methylbut-2-enyl diphosphate</name>
        <dbReference type="ChEBI" id="CHEBI:128753"/>
    </ligand>
</feature>
<feature type="binding site" evidence="1">
    <location>
        <position position="209"/>
    </location>
    <ligand>
        <name>dimethylallyl diphosphate</name>
        <dbReference type="ChEBI" id="CHEBI:57623"/>
    </ligand>
</feature>
<feature type="binding site" evidence="1">
    <location>
        <position position="209"/>
    </location>
    <ligand>
        <name>isopentenyl diphosphate</name>
        <dbReference type="ChEBI" id="CHEBI:128769"/>
    </ligand>
</feature>
<feature type="binding site" evidence="1">
    <location>
        <position position="210"/>
    </location>
    <ligand>
        <name>(2E)-4-hydroxy-3-methylbut-2-enyl diphosphate</name>
        <dbReference type="ChEBI" id="CHEBI:128753"/>
    </ligand>
</feature>
<feature type="binding site" evidence="1">
    <location>
        <position position="210"/>
    </location>
    <ligand>
        <name>dimethylallyl diphosphate</name>
        <dbReference type="ChEBI" id="CHEBI:57623"/>
    </ligand>
</feature>
<feature type="binding site" evidence="1">
    <location>
        <position position="210"/>
    </location>
    <ligand>
        <name>isopentenyl diphosphate</name>
        <dbReference type="ChEBI" id="CHEBI:128769"/>
    </ligand>
</feature>
<feature type="binding site" evidence="1">
    <location>
        <position position="211"/>
    </location>
    <ligand>
        <name>(2E)-4-hydroxy-3-methylbut-2-enyl diphosphate</name>
        <dbReference type="ChEBI" id="CHEBI:128753"/>
    </ligand>
</feature>
<feature type="binding site" evidence="1">
    <location>
        <position position="211"/>
    </location>
    <ligand>
        <name>dimethylallyl diphosphate</name>
        <dbReference type="ChEBI" id="CHEBI:57623"/>
    </ligand>
</feature>
<feature type="binding site" evidence="1">
    <location>
        <position position="211"/>
    </location>
    <ligand>
        <name>isopentenyl diphosphate</name>
        <dbReference type="ChEBI" id="CHEBI:128769"/>
    </ligand>
</feature>
<feature type="binding site" evidence="1">
    <location>
        <position position="251"/>
    </location>
    <ligand>
        <name>(2E)-4-hydroxy-3-methylbut-2-enyl diphosphate</name>
        <dbReference type="ChEBI" id="CHEBI:128753"/>
    </ligand>
</feature>
<feature type="binding site" evidence="1">
    <location>
        <position position="251"/>
    </location>
    <ligand>
        <name>dimethylallyl diphosphate</name>
        <dbReference type="ChEBI" id="CHEBI:57623"/>
    </ligand>
</feature>
<feature type="binding site" evidence="1">
    <location>
        <position position="251"/>
    </location>
    <ligand>
        <name>isopentenyl diphosphate</name>
        <dbReference type="ChEBI" id="CHEBI:128769"/>
    </ligand>
</feature>
<reference key="1">
    <citation type="journal article" date="2011" name="J. Bacteriol.">
        <title>Genome sequence of Thermotoga sp. strain RQ2, a hyperthermophilic bacterium isolated from a geothermally heated region of the seafloor near Ribeira Quente, the Azores.</title>
        <authorList>
            <person name="Swithers K.S."/>
            <person name="DiPippo J.L."/>
            <person name="Bruce D.C."/>
            <person name="Detter C."/>
            <person name="Tapia R."/>
            <person name="Han S."/>
            <person name="Saunders E."/>
            <person name="Goodwin L.A."/>
            <person name="Han J."/>
            <person name="Woyke T."/>
            <person name="Pitluck S."/>
            <person name="Pennacchio L."/>
            <person name="Nolan M."/>
            <person name="Mikhailova N."/>
            <person name="Lykidis A."/>
            <person name="Land M.L."/>
            <person name="Brettin T."/>
            <person name="Stetter K.O."/>
            <person name="Nelson K.E."/>
            <person name="Gogarten J.P."/>
            <person name="Noll K.M."/>
        </authorList>
    </citation>
    <scope>NUCLEOTIDE SEQUENCE [LARGE SCALE GENOMIC DNA]</scope>
    <source>
        <strain>RQ2</strain>
    </source>
</reference>
<protein>
    <recommendedName>
        <fullName evidence="1">4-hydroxy-3-methylbut-2-enyl diphosphate reductase</fullName>
        <shortName evidence="1">HMBPP reductase</shortName>
        <ecNumber evidence="1">1.17.7.4</ecNumber>
    </recommendedName>
</protein>
<keyword id="KW-0004">4Fe-4S</keyword>
<keyword id="KW-0408">Iron</keyword>
<keyword id="KW-0411">Iron-sulfur</keyword>
<keyword id="KW-0414">Isoprene biosynthesis</keyword>
<keyword id="KW-0479">Metal-binding</keyword>
<keyword id="KW-0560">Oxidoreductase</keyword>
<organism>
    <name type="scientific">Thermotoga sp. (strain RQ2)</name>
    <dbReference type="NCBI Taxonomy" id="126740"/>
    <lineage>
        <taxon>Bacteria</taxon>
        <taxon>Thermotogati</taxon>
        <taxon>Thermotogota</taxon>
        <taxon>Thermotogae</taxon>
        <taxon>Thermotogales</taxon>
        <taxon>Thermotogaceae</taxon>
        <taxon>Thermotoga</taxon>
    </lineage>
</organism>
<accession>B1LBI2</accession>
<comment type="function">
    <text evidence="1">Catalyzes the conversion of 1-hydroxy-2-methyl-2-(E)-butenyl 4-diphosphate (HMBPP) into a mixture of isopentenyl diphosphate (IPP) and dimethylallyl diphosphate (DMAPP). Acts in the terminal step of the DOXP/MEP pathway for isoprenoid precursor biosynthesis.</text>
</comment>
<comment type="catalytic activity">
    <reaction evidence="1">
        <text>isopentenyl diphosphate + 2 oxidized [2Fe-2S]-[ferredoxin] + H2O = (2E)-4-hydroxy-3-methylbut-2-enyl diphosphate + 2 reduced [2Fe-2S]-[ferredoxin] + 2 H(+)</text>
        <dbReference type="Rhea" id="RHEA:24488"/>
        <dbReference type="Rhea" id="RHEA-COMP:10000"/>
        <dbReference type="Rhea" id="RHEA-COMP:10001"/>
        <dbReference type="ChEBI" id="CHEBI:15377"/>
        <dbReference type="ChEBI" id="CHEBI:15378"/>
        <dbReference type="ChEBI" id="CHEBI:33737"/>
        <dbReference type="ChEBI" id="CHEBI:33738"/>
        <dbReference type="ChEBI" id="CHEBI:128753"/>
        <dbReference type="ChEBI" id="CHEBI:128769"/>
        <dbReference type="EC" id="1.17.7.4"/>
    </reaction>
</comment>
<comment type="catalytic activity">
    <reaction evidence="1">
        <text>dimethylallyl diphosphate + 2 oxidized [2Fe-2S]-[ferredoxin] + H2O = (2E)-4-hydroxy-3-methylbut-2-enyl diphosphate + 2 reduced [2Fe-2S]-[ferredoxin] + 2 H(+)</text>
        <dbReference type="Rhea" id="RHEA:24825"/>
        <dbReference type="Rhea" id="RHEA-COMP:10000"/>
        <dbReference type="Rhea" id="RHEA-COMP:10001"/>
        <dbReference type="ChEBI" id="CHEBI:15377"/>
        <dbReference type="ChEBI" id="CHEBI:15378"/>
        <dbReference type="ChEBI" id="CHEBI:33737"/>
        <dbReference type="ChEBI" id="CHEBI:33738"/>
        <dbReference type="ChEBI" id="CHEBI:57623"/>
        <dbReference type="ChEBI" id="CHEBI:128753"/>
        <dbReference type="EC" id="1.17.7.4"/>
    </reaction>
</comment>
<comment type="cofactor">
    <cofactor evidence="1">
        <name>[4Fe-4S] cluster</name>
        <dbReference type="ChEBI" id="CHEBI:49883"/>
    </cofactor>
    <text evidence="1">Binds 1 [4Fe-4S] cluster per subunit.</text>
</comment>
<comment type="pathway">
    <text evidence="1">Isoprenoid biosynthesis; dimethylallyl diphosphate biosynthesis; dimethylallyl diphosphate from (2E)-4-hydroxy-3-methylbutenyl diphosphate: step 1/1.</text>
</comment>
<comment type="pathway">
    <text evidence="1">Isoprenoid biosynthesis; isopentenyl diphosphate biosynthesis via DXP pathway; isopentenyl diphosphate from 1-deoxy-D-xylulose 5-phosphate: step 6/6.</text>
</comment>
<comment type="similarity">
    <text evidence="1">Belongs to the IspH family.</text>
</comment>
<dbReference type="EC" id="1.17.7.4" evidence="1"/>
<dbReference type="EMBL" id="CP000969">
    <property type="protein sequence ID" value="ACB09680.1"/>
    <property type="molecule type" value="Genomic_DNA"/>
</dbReference>
<dbReference type="RefSeq" id="WP_012311079.1">
    <property type="nucleotide sequence ID" value="NC_010483.1"/>
</dbReference>
<dbReference type="SMR" id="B1LBI2"/>
<dbReference type="KEGG" id="trq:TRQ2_1336"/>
<dbReference type="HOGENOM" id="CLU_027486_0_1_0"/>
<dbReference type="UniPathway" id="UPA00056">
    <property type="reaction ID" value="UER00097"/>
</dbReference>
<dbReference type="UniPathway" id="UPA00059">
    <property type="reaction ID" value="UER00105"/>
</dbReference>
<dbReference type="Proteomes" id="UP000001687">
    <property type="component" value="Chromosome"/>
</dbReference>
<dbReference type="GO" id="GO:0051539">
    <property type="term" value="F:4 iron, 4 sulfur cluster binding"/>
    <property type="evidence" value="ECO:0007669"/>
    <property type="project" value="UniProtKB-UniRule"/>
</dbReference>
<dbReference type="GO" id="GO:0051745">
    <property type="term" value="F:4-hydroxy-3-methylbut-2-enyl diphosphate reductase activity"/>
    <property type="evidence" value="ECO:0007669"/>
    <property type="project" value="UniProtKB-UniRule"/>
</dbReference>
<dbReference type="GO" id="GO:0046872">
    <property type="term" value="F:metal ion binding"/>
    <property type="evidence" value="ECO:0007669"/>
    <property type="project" value="UniProtKB-KW"/>
</dbReference>
<dbReference type="GO" id="GO:0050992">
    <property type="term" value="P:dimethylallyl diphosphate biosynthetic process"/>
    <property type="evidence" value="ECO:0007669"/>
    <property type="project" value="UniProtKB-UniRule"/>
</dbReference>
<dbReference type="GO" id="GO:0019288">
    <property type="term" value="P:isopentenyl diphosphate biosynthetic process, methylerythritol 4-phosphate pathway"/>
    <property type="evidence" value="ECO:0007669"/>
    <property type="project" value="UniProtKB-UniRule"/>
</dbReference>
<dbReference type="GO" id="GO:0016114">
    <property type="term" value="P:terpenoid biosynthetic process"/>
    <property type="evidence" value="ECO:0007669"/>
    <property type="project" value="UniProtKB-UniRule"/>
</dbReference>
<dbReference type="CDD" id="cd13944">
    <property type="entry name" value="lytB_ispH"/>
    <property type="match status" value="1"/>
</dbReference>
<dbReference type="Gene3D" id="3.40.50.11270">
    <property type="match status" value="1"/>
</dbReference>
<dbReference type="Gene3D" id="3.40.1010.20">
    <property type="entry name" value="4-hydroxy-3-methylbut-2-enyl diphosphate reductase, catalytic domain"/>
    <property type="match status" value="2"/>
</dbReference>
<dbReference type="HAMAP" id="MF_00191">
    <property type="entry name" value="IspH"/>
    <property type="match status" value="1"/>
</dbReference>
<dbReference type="InterPro" id="IPR003451">
    <property type="entry name" value="LytB/IspH"/>
</dbReference>
<dbReference type="NCBIfam" id="TIGR00216">
    <property type="entry name" value="ispH_lytB"/>
    <property type="match status" value="1"/>
</dbReference>
<dbReference type="PANTHER" id="PTHR30426">
    <property type="entry name" value="4-HYDROXY-3-METHYLBUT-2-ENYL DIPHOSPHATE REDUCTASE"/>
    <property type="match status" value="1"/>
</dbReference>
<dbReference type="PANTHER" id="PTHR30426:SF0">
    <property type="entry name" value="4-HYDROXY-3-METHYLBUT-2-ENYL DIPHOSPHATE REDUCTASE"/>
    <property type="match status" value="1"/>
</dbReference>
<dbReference type="Pfam" id="PF02401">
    <property type="entry name" value="LYTB"/>
    <property type="match status" value="1"/>
</dbReference>
<name>ISPH_THESQ</name>
<sequence length="275" mass="30955">MKIVVAKNIGFCFGVERAIRTVEELLDEGKKVVTDGEIVHNKQVMEQLTKKGLKVSSEMTDGEVFVVRAHGIPKDRLEELKKIFPEVVDLTCPIVSQLFKTAQRYAKERKVIVFGKEDHPEMVALRGYAPAIVTKVPFKFEEKKVVFLSQTTSSLEEYKEFVAAMIRMNEFEEAVFLNTICPVTVNREREVEELSKICDLSIVVGGKHSSNTGKLFRIASKHSKTIWIESPDELPADVVKYGTVCVFSGTSTPNSLIENVVRKLKEMEGKRDGTI</sequence>
<proteinExistence type="inferred from homology"/>
<evidence type="ECO:0000255" key="1">
    <source>
        <dbReference type="HAMAP-Rule" id="MF_00191"/>
    </source>
</evidence>